<sequence>MKKVIILGSTGSIGTQTLDVIKNFRENFEIVGLTAYNNVELLSKQIREFNPKVVAVKDEDKANQLRENLKKNVEILTGSKGLQEIVKYDADLVVVAVEGIAGLIPTVTAIQMGKDIALANKEVLVTAGQIVMDLVKKKDISLLPVDSEHSAILQCLRGNDKKEVSRLILTASGGPFRGKKKEDLRKVTVNEALNHPNWKMGKKITIDSATLMNKGFEVIEAKWLFDISEDKIDVIVHPQSIIHSMVEYIDGSVIAQLATADMRIPIHYALNYPTRNYINGMNFLDFSLTTQLTFEKPDLETFRCLSLAYEALKIGGTMTTVLNAADEIAVSLFLNKKIEFLQIAEIIEESMKEHNNIQNPTLDDIINVDEEVKEKIAKKYMR</sequence>
<accession>B0K1E5</accession>
<organism>
    <name type="scientific">Thermoanaerobacter sp. (strain X514)</name>
    <dbReference type="NCBI Taxonomy" id="399726"/>
    <lineage>
        <taxon>Bacteria</taxon>
        <taxon>Bacillati</taxon>
        <taxon>Bacillota</taxon>
        <taxon>Clostridia</taxon>
        <taxon>Thermoanaerobacterales</taxon>
        <taxon>Thermoanaerobacteraceae</taxon>
        <taxon>Thermoanaerobacter</taxon>
    </lineage>
</organism>
<evidence type="ECO:0000255" key="1">
    <source>
        <dbReference type="HAMAP-Rule" id="MF_00183"/>
    </source>
</evidence>
<reference key="1">
    <citation type="submission" date="2008-01" db="EMBL/GenBank/DDBJ databases">
        <title>Complete sequence of Thermoanaerobacter sp. X514.</title>
        <authorList>
            <consortium name="US DOE Joint Genome Institute"/>
            <person name="Copeland A."/>
            <person name="Lucas S."/>
            <person name="Lapidus A."/>
            <person name="Barry K."/>
            <person name="Glavina del Rio T."/>
            <person name="Dalin E."/>
            <person name="Tice H."/>
            <person name="Pitluck S."/>
            <person name="Bruce D."/>
            <person name="Goodwin L."/>
            <person name="Saunders E."/>
            <person name="Brettin T."/>
            <person name="Detter J.C."/>
            <person name="Han C."/>
            <person name="Schmutz J."/>
            <person name="Larimer F."/>
            <person name="Land M."/>
            <person name="Hauser L."/>
            <person name="Kyrpides N."/>
            <person name="Kim E."/>
            <person name="Hemme C."/>
            <person name="Fields M.W."/>
            <person name="He Z."/>
            <person name="Zhou J."/>
            <person name="Richardson P."/>
        </authorList>
    </citation>
    <scope>NUCLEOTIDE SEQUENCE [LARGE SCALE GENOMIC DNA]</scope>
    <source>
        <strain>X514</strain>
    </source>
</reference>
<proteinExistence type="inferred from homology"/>
<feature type="chain" id="PRO_1000098521" description="1-deoxy-D-xylulose 5-phosphate reductoisomerase">
    <location>
        <begin position="1"/>
        <end position="382"/>
    </location>
</feature>
<feature type="binding site" evidence="1">
    <location>
        <position position="10"/>
    </location>
    <ligand>
        <name>NADPH</name>
        <dbReference type="ChEBI" id="CHEBI:57783"/>
    </ligand>
</feature>
<feature type="binding site" evidence="1">
    <location>
        <position position="11"/>
    </location>
    <ligand>
        <name>NADPH</name>
        <dbReference type="ChEBI" id="CHEBI:57783"/>
    </ligand>
</feature>
<feature type="binding site" evidence="1">
    <location>
        <position position="12"/>
    </location>
    <ligand>
        <name>NADPH</name>
        <dbReference type="ChEBI" id="CHEBI:57783"/>
    </ligand>
</feature>
<feature type="binding site" evidence="1">
    <location>
        <position position="13"/>
    </location>
    <ligand>
        <name>NADPH</name>
        <dbReference type="ChEBI" id="CHEBI:57783"/>
    </ligand>
</feature>
<feature type="binding site" evidence="1">
    <location>
        <position position="38"/>
    </location>
    <ligand>
        <name>NADPH</name>
        <dbReference type="ChEBI" id="CHEBI:57783"/>
    </ligand>
</feature>
<feature type="binding site" evidence="1">
    <location>
        <position position="120"/>
    </location>
    <ligand>
        <name>NADPH</name>
        <dbReference type="ChEBI" id="CHEBI:57783"/>
    </ligand>
</feature>
<feature type="binding site" evidence="1">
    <location>
        <position position="121"/>
    </location>
    <ligand>
        <name>1-deoxy-D-xylulose 5-phosphate</name>
        <dbReference type="ChEBI" id="CHEBI:57792"/>
    </ligand>
</feature>
<feature type="binding site" evidence="1">
    <location>
        <position position="122"/>
    </location>
    <ligand>
        <name>NADPH</name>
        <dbReference type="ChEBI" id="CHEBI:57783"/>
    </ligand>
</feature>
<feature type="binding site" evidence="1">
    <location>
        <position position="146"/>
    </location>
    <ligand>
        <name>Mn(2+)</name>
        <dbReference type="ChEBI" id="CHEBI:29035"/>
    </ligand>
</feature>
<feature type="binding site" evidence="1">
    <location>
        <position position="147"/>
    </location>
    <ligand>
        <name>1-deoxy-D-xylulose 5-phosphate</name>
        <dbReference type="ChEBI" id="CHEBI:57792"/>
    </ligand>
</feature>
<feature type="binding site" evidence="1">
    <location>
        <position position="148"/>
    </location>
    <ligand>
        <name>1-deoxy-D-xylulose 5-phosphate</name>
        <dbReference type="ChEBI" id="CHEBI:57792"/>
    </ligand>
</feature>
<feature type="binding site" evidence="1">
    <location>
        <position position="148"/>
    </location>
    <ligand>
        <name>Mn(2+)</name>
        <dbReference type="ChEBI" id="CHEBI:29035"/>
    </ligand>
</feature>
<feature type="binding site" evidence="1">
    <location>
        <position position="172"/>
    </location>
    <ligand>
        <name>1-deoxy-D-xylulose 5-phosphate</name>
        <dbReference type="ChEBI" id="CHEBI:57792"/>
    </ligand>
</feature>
<feature type="binding site" evidence="1">
    <location>
        <position position="195"/>
    </location>
    <ligand>
        <name>1-deoxy-D-xylulose 5-phosphate</name>
        <dbReference type="ChEBI" id="CHEBI:57792"/>
    </ligand>
</feature>
<feature type="binding site" evidence="1">
    <location>
        <position position="201"/>
    </location>
    <ligand>
        <name>NADPH</name>
        <dbReference type="ChEBI" id="CHEBI:57783"/>
    </ligand>
</feature>
<feature type="binding site" evidence="1">
    <location>
        <position position="208"/>
    </location>
    <ligand>
        <name>1-deoxy-D-xylulose 5-phosphate</name>
        <dbReference type="ChEBI" id="CHEBI:57792"/>
    </ligand>
</feature>
<feature type="binding site" evidence="1">
    <location>
        <position position="213"/>
    </location>
    <ligand>
        <name>1-deoxy-D-xylulose 5-phosphate</name>
        <dbReference type="ChEBI" id="CHEBI:57792"/>
    </ligand>
</feature>
<feature type="binding site" evidence="1">
    <location>
        <position position="214"/>
    </location>
    <ligand>
        <name>1-deoxy-D-xylulose 5-phosphate</name>
        <dbReference type="ChEBI" id="CHEBI:57792"/>
    </ligand>
</feature>
<feature type="binding site" evidence="1">
    <location>
        <position position="217"/>
    </location>
    <ligand>
        <name>1-deoxy-D-xylulose 5-phosphate</name>
        <dbReference type="ChEBI" id="CHEBI:57792"/>
    </ligand>
</feature>
<feature type="binding site" evidence="1">
    <location>
        <position position="217"/>
    </location>
    <ligand>
        <name>Mn(2+)</name>
        <dbReference type="ChEBI" id="CHEBI:29035"/>
    </ligand>
</feature>
<gene>
    <name evidence="1" type="primary">dxr</name>
    <name type="ordered locus">Teth514_1654</name>
</gene>
<comment type="function">
    <text evidence="1">Catalyzes the NADPH-dependent rearrangement and reduction of 1-deoxy-D-xylulose-5-phosphate (DXP) to 2-C-methyl-D-erythritol 4-phosphate (MEP).</text>
</comment>
<comment type="catalytic activity">
    <reaction evidence="1">
        <text>2-C-methyl-D-erythritol 4-phosphate + NADP(+) = 1-deoxy-D-xylulose 5-phosphate + NADPH + H(+)</text>
        <dbReference type="Rhea" id="RHEA:13717"/>
        <dbReference type="ChEBI" id="CHEBI:15378"/>
        <dbReference type="ChEBI" id="CHEBI:57783"/>
        <dbReference type="ChEBI" id="CHEBI:57792"/>
        <dbReference type="ChEBI" id="CHEBI:58262"/>
        <dbReference type="ChEBI" id="CHEBI:58349"/>
        <dbReference type="EC" id="1.1.1.267"/>
    </reaction>
    <physiologicalReaction direction="right-to-left" evidence="1">
        <dbReference type="Rhea" id="RHEA:13719"/>
    </physiologicalReaction>
</comment>
<comment type="cofactor">
    <cofactor evidence="1">
        <name>Mg(2+)</name>
        <dbReference type="ChEBI" id="CHEBI:18420"/>
    </cofactor>
    <cofactor evidence="1">
        <name>Mn(2+)</name>
        <dbReference type="ChEBI" id="CHEBI:29035"/>
    </cofactor>
</comment>
<comment type="pathway">
    <text evidence="1">Isoprenoid biosynthesis; isopentenyl diphosphate biosynthesis via DXP pathway; isopentenyl diphosphate from 1-deoxy-D-xylulose 5-phosphate: step 1/6.</text>
</comment>
<comment type="similarity">
    <text evidence="1">Belongs to the DXR family.</text>
</comment>
<dbReference type="EC" id="1.1.1.267" evidence="1"/>
<dbReference type="EMBL" id="CP000923">
    <property type="protein sequence ID" value="ABY92940.1"/>
    <property type="molecule type" value="Genomic_DNA"/>
</dbReference>
<dbReference type="RefSeq" id="WP_009052397.1">
    <property type="nucleotide sequence ID" value="NC_010320.1"/>
</dbReference>
<dbReference type="SMR" id="B0K1E5"/>
<dbReference type="KEGG" id="tex:Teth514_1654"/>
<dbReference type="HOGENOM" id="CLU_035714_4_0_9"/>
<dbReference type="UniPathway" id="UPA00056">
    <property type="reaction ID" value="UER00092"/>
</dbReference>
<dbReference type="Proteomes" id="UP000002155">
    <property type="component" value="Chromosome"/>
</dbReference>
<dbReference type="GO" id="GO:0030604">
    <property type="term" value="F:1-deoxy-D-xylulose-5-phosphate reductoisomerase activity"/>
    <property type="evidence" value="ECO:0007669"/>
    <property type="project" value="UniProtKB-UniRule"/>
</dbReference>
<dbReference type="GO" id="GO:0030145">
    <property type="term" value="F:manganese ion binding"/>
    <property type="evidence" value="ECO:0007669"/>
    <property type="project" value="TreeGrafter"/>
</dbReference>
<dbReference type="GO" id="GO:0070402">
    <property type="term" value="F:NADPH binding"/>
    <property type="evidence" value="ECO:0007669"/>
    <property type="project" value="InterPro"/>
</dbReference>
<dbReference type="GO" id="GO:0051484">
    <property type="term" value="P:isopentenyl diphosphate biosynthetic process, methylerythritol 4-phosphate pathway involved in terpenoid biosynthetic process"/>
    <property type="evidence" value="ECO:0007669"/>
    <property type="project" value="TreeGrafter"/>
</dbReference>
<dbReference type="FunFam" id="3.40.50.720:FF:000045">
    <property type="entry name" value="1-deoxy-D-xylulose 5-phosphate reductoisomerase"/>
    <property type="match status" value="1"/>
</dbReference>
<dbReference type="Gene3D" id="1.10.1740.10">
    <property type="match status" value="1"/>
</dbReference>
<dbReference type="Gene3D" id="3.40.50.720">
    <property type="entry name" value="NAD(P)-binding Rossmann-like Domain"/>
    <property type="match status" value="1"/>
</dbReference>
<dbReference type="HAMAP" id="MF_00183">
    <property type="entry name" value="DXP_reductoisom"/>
    <property type="match status" value="1"/>
</dbReference>
<dbReference type="InterPro" id="IPR003821">
    <property type="entry name" value="DXP_reductoisomerase"/>
</dbReference>
<dbReference type="InterPro" id="IPR013644">
    <property type="entry name" value="DXP_reductoisomerase_C"/>
</dbReference>
<dbReference type="InterPro" id="IPR013512">
    <property type="entry name" value="DXP_reductoisomerase_N"/>
</dbReference>
<dbReference type="InterPro" id="IPR026877">
    <property type="entry name" value="DXPR_C"/>
</dbReference>
<dbReference type="InterPro" id="IPR036169">
    <property type="entry name" value="DXPR_C_sf"/>
</dbReference>
<dbReference type="InterPro" id="IPR036291">
    <property type="entry name" value="NAD(P)-bd_dom_sf"/>
</dbReference>
<dbReference type="NCBIfam" id="TIGR00243">
    <property type="entry name" value="Dxr"/>
    <property type="match status" value="1"/>
</dbReference>
<dbReference type="NCBIfam" id="NF009114">
    <property type="entry name" value="PRK12464.1"/>
    <property type="match status" value="1"/>
</dbReference>
<dbReference type="PANTHER" id="PTHR30525">
    <property type="entry name" value="1-DEOXY-D-XYLULOSE 5-PHOSPHATE REDUCTOISOMERASE"/>
    <property type="match status" value="1"/>
</dbReference>
<dbReference type="PANTHER" id="PTHR30525:SF0">
    <property type="entry name" value="1-DEOXY-D-XYLULOSE 5-PHOSPHATE REDUCTOISOMERASE, CHLOROPLASTIC"/>
    <property type="match status" value="1"/>
</dbReference>
<dbReference type="Pfam" id="PF08436">
    <property type="entry name" value="DXP_redisom_C"/>
    <property type="match status" value="1"/>
</dbReference>
<dbReference type="Pfam" id="PF02670">
    <property type="entry name" value="DXP_reductoisom"/>
    <property type="match status" value="1"/>
</dbReference>
<dbReference type="Pfam" id="PF13288">
    <property type="entry name" value="DXPR_C"/>
    <property type="match status" value="1"/>
</dbReference>
<dbReference type="PIRSF" id="PIRSF006205">
    <property type="entry name" value="Dxp_reductismrs"/>
    <property type="match status" value="1"/>
</dbReference>
<dbReference type="SUPFAM" id="SSF69055">
    <property type="entry name" value="1-deoxy-D-xylulose-5-phosphate reductoisomerase, C-terminal domain"/>
    <property type="match status" value="1"/>
</dbReference>
<dbReference type="SUPFAM" id="SSF55347">
    <property type="entry name" value="Glyceraldehyde-3-phosphate dehydrogenase-like, C-terminal domain"/>
    <property type="match status" value="1"/>
</dbReference>
<dbReference type="SUPFAM" id="SSF51735">
    <property type="entry name" value="NAD(P)-binding Rossmann-fold domains"/>
    <property type="match status" value="1"/>
</dbReference>
<protein>
    <recommendedName>
        <fullName evidence="1">1-deoxy-D-xylulose 5-phosphate reductoisomerase</fullName>
        <shortName evidence="1">DXP reductoisomerase</shortName>
        <ecNumber evidence="1">1.1.1.267</ecNumber>
    </recommendedName>
    <alternativeName>
        <fullName evidence="1">1-deoxyxylulose-5-phosphate reductoisomerase</fullName>
    </alternativeName>
    <alternativeName>
        <fullName evidence="1">2-C-methyl-D-erythritol 4-phosphate synthase</fullName>
    </alternativeName>
</protein>
<name>DXR_THEPX</name>
<keyword id="KW-0414">Isoprene biosynthesis</keyword>
<keyword id="KW-0464">Manganese</keyword>
<keyword id="KW-0479">Metal-binding</keyword>
<keyword id="KW-0521">NADP</keyword>
<keyword id="KW-0560">Oxidoreductase</keyword>